<sequence length="175" mass="20100">MTLNTVLSGKNIPEDIYVIIEISAHSNPIKYEVNKDLGLLFVDRFIPVPMFYPCNYGFINKTKSNDGDPLDVLVHTPYPILPGSIIRCKPIGVLNMFDESGEDYKIIAIPHPKVCLEYSSINDICHLSPTLKQQIIHFFKHYKNLENNKWVKIIGWENKKNAEKIILSACEKFHK</sequence>
<organism>
    <name type="scientific">Buchnera aphidicola subsp. Baizongia pistaciae (strain Bp)</name>
    <dbReference type="NCBI Taxonomy" id="224915"/>
    <lineage>
        <taxon>Bacteria</taxon>
        <taxon>Pseudomonadati</taxon>
        <taxon>Pseudomonadota</taxon>
        <taxon>Gammaproteobacteria</taxon>
        <taxon>Enterobacterales</taxon>
        <taxon>Erwiniaceae</taxon>
        <taxon>Buchnera</taxon>
    </lineage>
</organism>
<accession>P59417</accession>
<reference key="1">
    <citation type="journal article" date="2003" name="Proc. Natl. Acad. Sci. U.S.A.">
        <title>Reductive genome evolution in Buchnera aphidicola.</title>
        <authorList>
            <person name="van Ham R.C.H.J."/>
            <person name="Kamerbeek J."/>
            <person name="Palacios C."/>
            <person name="Rausell C."/>
            <person name="Abascal F."/>
            <person name="Bastolla U."/>
            <person name="Fernandez J.M."/>
            <person name="Jimenez L."/>
            <person name="Postigo M."/>
            <person name="Silva F.J."/>
            <person name="Tamames J."/>
            <person name="Viguera E."/>
            <person name="Latorre A."/>
            <person name="Valencia A."/>
            <person name="Moran F."/>
            <person name="Moya A."/>
        </authorList>
    </citation>
    <scope>NUCLEOTIDE SEQUENCE [LARGE SCALE GENOMIC DNA]</scope>
    <source>
        <strain>Bp</strain>
    </source>
</reference>
<comment type="function">
    <text evidence="1">Catalyzes the hydrolysis of inorganic pyrophosphate (PPi) forming two phosphate ions.</text>
</comment>
<comment type="catalytic activity">
    <reaction evidence="1">
        <text>diphosphate + H2O = 2 phosphate + H(+)</text>
        <dbReference type="Rhea" id="RHEA:24576"/>
        <dbReference type="ChEBI" id="CHEBI:15377"/>
        <dbReference type="ChEBI" id="CHEBI:15378"/>
        <dbReference type="ChEBI" id="CHEBI:33019"/>
        <dbReference type="ChEBI" id="CHEBI:43474"/>
        <dbReference type="EC" id="3.6.1.1"/>
    </reaction>
</comment>
<comment type="cofactor">
    <cofactor evidence="1">
        <name>Mg(2+)</name>
        <dbReference type="ChEBI" id="CHEBI:18420"/>
    </cofactor>
</comment>
<comment type="subunit">
    <text evidence="1">Homohexamer.</text>
</comment>
<comment type="subcellular location">
    <subcellularLocation>
        <location evidence="1">Cytoplasm</location>
    </subcellularLocation>
</comment>
<comment type="similarity">
    <text evidence="1">Belongs to the PPase family.</text>
</comment>
<gene>
    <name evidence="1" type="primary">ppa</name>
    <name type="ordered locus">bbp_082</name>
</gene>
<proteinExistence type="inferred from homology"/>
<dbReference type="EC" id="3.6.1.1" evidence="1"/>
<dbReference type="EMBL" id="AE016826">
    <property type="protein sequence ID" value="AAO26818.1"/>
    <property type="molecule type" value="Genomic_DNA"/>
</dbReference>
<dbReference type="RefSeq" id="WP_011091219.1">
    <property type="nucleotide sequence ID" value="NC_004545.1"/>
</dbReference>
<dbReference type="SMR" id="P59417"/>
<dbReference type="STRING" id="224915.bbp_082"/>
<dbReference type="KEGG" id="bab:bbp_082"/>
<dbReference type="eggNOG" id="COG0221">
    <property type="taxonomic scope" value="Bacteria"/>
</dbReference>
<dbReference type="HOGENOM" id="CLU_073198_1_0_6"/>
<dbReference type="OrthoDB" id="5187599at2"/>
<dbReference type="Proteomes" id="UP000000601">
    <property type="component" value="Chromosome"/>
</dbReference>
<dbReference type="GO" id="GO:0005737">
    <property type="term" value="C:cytoplasm"/>
    <property type="evidence" value="ECO:0007669"/>
    <property type="project" value="UniProtKB-SubCell"/>
</dbReference>
<dbReference type="GO" id="GO:0004427">
    <property type="term" value="F:inorganic diphosphate phosphatase activity"/>
    <property type="evidence" value="ECO:0007669"/>
    <property type="project" value="UniProtKB-UniRule"/>
</dbReference>
<dbReference type="GO" id="GO:0000287">
    <property type="term" value="F:magnesium ion binding"/>
    <property type="evidence" value="ECO:0007669"/>
    <property type="project" value="UniProtKB-UniRule"/>
</dbReference>
<dbReference type="GO" id="GO:0006796">
    <property type="term" value="P:phosphate-containing compound metabolic process"/>
    <property type="evidence" value="ECO:0007669"/>
    <property type="project" value="InterPro"/>
</dbReference>
<dbReference type="CDD" id="cd00412">
    <property type="entry name" value="pyrophosphatase"/>
    <property type="match status" value="1"/>
</dbReference>
<dbReference type="Gene3D" id="3.90.80.10">
    <property type="entry name" value="Inorganic pyrophosphatase"/>
    <property type="match status" value="1"/>
</dbReference>
<dbReference type="HAMAP" id="MF_00209">
    <property type="entry name" value="Inorganic_PPase"/>
    <property type="match status" value="1"/>
</dbReference>
<dbReference type="InterPro" id="IPR008162">
    <property type="entry name" value="Pyrophosphatase"/>
</dbReference>
<dbReference type="InterPro" id="IPR036649">
    <property type="entry name" value="Pyrophosphatase_sf"/>
</dbReference>
<dbReference type="NCBIfam" id="NF002317">
    <property type="entry name" value="PRK01250.1"/>
    <property type="match status" value="1"/>
</dbReference>
<dbReference type="PANTHER" id="PTHR10286">
    <property type="entry name" value="INORGANIC PYROPHOSPHATASE"/>
    <property type="match status" value="1"/>
</dbReference>
<dbReference type="Pfam" id="PF00719">
    <property type="entry name" value="Pyrophosphatase"/>
    <property type="match status" value="1"/>
</dbReference>
<dbReference type="SUPFAM" id="SSF50324">
    <property type="entry name" value="Inorganic pyrophosphatase"/>
    <property type="match status" value="1"/>
</dbReference>
<dbReference type="PROSITE" id="PS00387">
    <property type="entry name" value="PPASE"/>
    <property type="match status" value="1"/>
</dbReference>
<protein>
    <recommendedName>
        <fullName evidence="1">Inorganic pyrophosphatase</fullName>
        <ecNumber evidence="1">3.6.1.1</ecNumber>
    </recommendedName>
    <alternativeName>
        <fullName evidence="1">Pyrophosphate phospho-hydrolase</fullName>
        <shortName evidence="1">PPase</shortName>
    </alternativeName>
</protein>
<keyword id="KW-0963">Cytoplasm</keyword>
<keyword id="KW-0378">Hydrolase</keyword>
<keyword id="KW-0460">Magnesium</keyword>
<keyword id="KW-0479">Metal-binding</keyword>
<keyword id="KW-1185">Reference proteome</keyword>
<feature type="chain" id="PRO_0000137486" description="Inorganic pyrophosphatase">
    <location>
        <begin position="1"/>
        <end position="175"/>
    </location>
</feature>
<feature type="binding site" evidence="1">
    <location>
        <position position="30"/>
    </location>
    <ligand>
        <name>substrate</name>
    </ligand>
</feature>
<feature type="binding site" evidence="1">
    <location>
        <position position="44"/>
    </location>
    <ligand>
        <name>substrate</name>
    </ligand>
</feature>
<feature type="binding site" evidence="1">
    <location>
        <position position="56"/>
    </location>
    <ligand>
        <name>substrate</name>
    </ligand>
</feature>
<feature type="binding site" evidence="1">
    <location>
        <position position="66"/>
    </location>
    <ligand>
        <name>Mg(2+)</name>
        <dbReference type="ChEBI" id="CHEBI:18420"/>
        <label>1</label>
    </ligand>
</feature>
<feature type="binding site" evidence="1">
    <location>
        <position position="71"/>
    </location>
    <ligand>
        <name>Mg(2+)</name>
        <dbReference type="ChEBI" id="CHEBI:18420"/>
        <label>1</label>
    </ligand>
</feature>
<feature type="binding site" evidence="1">
    <location>
        <position position="71"/>
    </location>
    <ligand>
        <name>Mg(2+)</name>
        <dbReference type="ChEBI" id="CHEBI:18420"/>
        <label>2</label>
    </ligand>
</feature>
<feature type="binding site" evidence="1">
    <location>
        <position position="103"/>
    </location>
    <ligand>
        <name>Mg(2+)</name>
        <dbReference type="ChEBI" id="CHEBI:18420"/>
        <label>1</label>
    </ligand>
</feature>
<feature type="binding site" evidence="1">
    <location>
        <position position="142"/>
    </location>
    <ligand>
        <name>substrate</name>
    </ligand>
</feature>
<evidence type="ECO:0000255" key="1">
    <source>
        <dbReference type="HAMAP-Rule" id="MF_00209"/>
    </source>
</evidence>
<name>IPYR_BUCBP</name>